<gene>
    <name evidence="1" type="primary">rsgA</name>
    <name type="ordered locus">Asuc_0993</name>
</gene>
<comment type="function">
    <text evidence="1">One of several proteins that assist in the late maturation steps of the functional core of the 30S ribosomal subunit. Helps release RbfA from mature subunits. May play a role in the assembly of ribosomal proteins into the subunit. Circularly permuted GTPase that catalyzes slow GTP hydrolysis, GTPase activity is stimulated by the 30S ribosomal subunit.</text>
</comment>
<comment type="cofactor">
    <cofactor evidence="1">
        <name>Zn(2+)</name>
        <dbReference type="ChEBI" id="CHEBI:29105"/>
    </cofactor>
    <text evidence="1">Binds 1 zinc ion per subunit.</text>
</comment>
<comment type="subunit">
    <text evidence="1">Monomer. Associates with 30S ribosomal subunit, binds 16S rRNA.</text>
</comment>
<comment type="subcellular location">
    <subcellularLocation>
        <location evidence="1">Cytoplasm</location>
    </subcellularLocation>
</comment>
<comment type="similarity">
    <text evidence="1">Belongs to the TRAFAC class YlqF/YawG GTPase family. RsgA subfamily.</text>
</comment>
<dbReference type="EC" id="3.6.1.-" evidence="1"/>
<dbReference type="EMBL" id="CP000746">
    <property type="protein sequence ID" value="ABR74361.1"/>
    <property type="molecule type" value="Genomic_DNA"/>
</dbReference>
<dbReference type="RefSeq" id="WP_012072738.1">
    <property type="nucleotide sequence ID" value="NC_009655.1"/>
</dbReference>
<dbReference type="SMR" id="A6VN14"/>
<dbReference type="STRING" id="339671.Asuc_0993"/>
<dbReference type="KEGG" id="asu:Asuc_0993"/>
<dbReference type="eggNOG" id="COG1162">
    <property type="taxonomic scope" value="Bacteria"/>
</dbReference>
<dbReference type="HOGENOM" id="CLU_033617_2_0_6"/>
<dbReference type="OrthoDB" id="9809485at2"/>
<dbReference type="Proteomes" id="UP000001114">
    <property type="component" value="Chromosome"/>
</dbReference>
<dbReference type="GO" id="GO:0005737">
    <property type="term" value="C:cytoplasm"/>
    <property type="evidence" value="ECO:0007669"/>
    <property type="project" value="UniProtKB-SubCell"/>
</dbReference>
<dbReference type="GO" id="GO:0005525">
    <property type="term" value="F:GTP binding"/>
    <property type="evidence" value="ECO:0007669"/>
    <property type="project" value="UniProtKB-UniRule"/>
</dbReference>
<dbReference type="GO" id="GO:0003924">
    <property type="term" value="F:GTPase activity"/>
    <property type="evidence" value="ECO:0007669"/>
    <property type="project" value="UniProtKB-UniRule"/>
</dbReference>
<dbReference type="GO" id="GO:0046872">
    <property type="term" value="F:metal ion binding"/>
    <property type="evidence" value="ECO:0007669"/>
    <property type="project" value="UniProtKB-KW"/>
</dbReference>
<dbReference type="GO" id="GO:0019843">
    <property type="term" value="F:rRNA binding"/>
    <property type="evidence" value="ECO:0007669"/>
    <property type="project" value="UniProtKB-KW"/>
</dbReference>
<dbReference type="GO" id="GO:0042274">
    <property type="term" value="P:ribosomal small subunit biogenesis"/>
    <property type="evidence" value="ECO:0007669"/>
    <property type="project" value="UniProtKB-UniRule"/>
</dbReference>
<dbReference type="CDD" id="cd01854">
    <property type="entry name" value="YjeQ_EngC"/>
    <property type="match status" value="1"/>
</dbReference>
<dbReference type="Gene3D" id="2.40.50.140">
    <property type="entry name" value="Nucleic acid-binding proteins"/>
    <property type="match status" value="1"/>
</dbReference>
<dbReference type="Gene3D" id="3.40.50.300">
    <property type="entry name" value="P-loop containing nucleotide triphosphate hydrolases"/>
    <property type="match status" value="1"/>
</dbReference>
<dbReference type="Gene3D" id="1.10.40.50">
    <property type="entry name" value="Probable gtpase engc, domain 3"/>
    <property type="match status" value="1"/>
</dbReference>
<dbReference type="HAMAP" id="MF_01820">
    <property type="entry name" value="GTPase_RsgA"/>
    <property type="match status" value="1"/>
</dbReference>
<dbReference type="InterPro" id="IPR030378">
    <property type="entry name" value="G_CP_dom"/>
</dbReference>
<dbReference type="InterPro" id="IPR012340">
    <property type="entry name" value="NA-bd_OB-fold"/>
</dbReference>
<dbReference type="InterPro" id="IPR027417">
    <property type="entry name" value="P-loop_NTPase"/>
</dbReference>
<dbReference type="InterPro" id="IPR004881">
    <property type="entry name" value="Ribosome_biogen_GTPase_RsgA"/>
</dbReference>
<dbReference type="InterPro" id="IPR010914">
    <property type="entry name" value="RsgA_GTPase_dom"/>
</dbReference>
<dbReference type="NCBIfam" id="NF008931">
    <property type="entry name" value="PRK12288.1"/>
    <property type="match status" value="1"/>
</dbReference>
<dbReference type="NCBIfam" id="TIGR00157">
    <property type="entry name" value="ribosome small subunit-dependent GTPase A"/>
    <property type="match status" value="1"/>
</dbReference>
<dbReference type="PANTHER" id="PTHR32120">
    <property type="entry name" value="SMALL RIBOSOMAL SUBUNIT BIOGENESIS GTPASE RSGA"/>
    <property type="match status" value="1"/>
</dbReference>
<dbReference type="PANTHER" id="PTHR32120:SF11">
    <property type="entry name" value="SMALL RIBOSOMAL SUBUNIT BIOGENESIS GTPASE RSGA 1, MITOCHONDRIAL-RELATED"/>
    <property type="match status" value="1"/>
</dbReference>
<dbReference type="Pfam" id="PF03193">
    <property type="entry name" value="RsgA_GTPase"/>
    <property type="match status" value="1"/>
</dbReference>
<dbReference type="SUPFAM" id="SSF52540">
    <property type="entry name" value="P-loop containing nucleoside triphosphate hydrolases"/>
    <property type="match status" value="1"/>
</dbReference>
<dbReference type="PROSITE" id="PS50936">
    <property type="entry name" value="ENGC_GTPASE"/>
    <property type="match status" value="1"/>
</dbReference>
<dbReference type="PROSITE" id="PS51721">
    <property type="entry name" value="G_CP"/>
    <property type="match status" value="1"/>
</dbReference>
<name>RSGA_ACTSZ</name>
<evidence type="ECO:0000255" key="1">
    <source>
        <dbReference type="HAMAP-Rule" id="MF_01820"/>
    </source>
</evidence>
<evidence type="ECO:0000255" key="2">
    <source>
        <dbReference type="PROSITE-ProRule" id="PRU01058"/>
    </source>
</evidence>
<evidence type="ECO:0000256" key="3">
    <source>
        <dbReference type="SAM" id="MobiDB-lite"/>
    </source>
</evidence>
<keyword id="KW-0963">Cytoplasm</keyword>
<keyword id="KW-0342">GTP-binding</keyword>
<keyword id="KW-0378">Hydrolase</keyword>
<keyword id="KW-0479">Metal-binding</keyword>
<keyword id="KW-0547">Nucleotide-binding</keyword>
<keyword id="KW-1185">Reference proteome</keyword>
<keyword id="KW-0690">Ribosome biogenesis</keyword>
<keyword id="KW-0694">RNA-binding</keyword>
<keyword id="KW-0699">rRNA-binding</keyword>
<keyword id="KW-0862">Zinc</keyword>
<proteinExistence type="inferred from homology"/>
<feature type="chain" id="PRO_1000188024" description="Small ribosomal subunit biogenesis GTPase RsgA">
    <location>
        <begin position="1"/>
        <end position="348"/>
    </location>
</feature>
<feature type="domain" description="CP-type G" evidence="2">
    <location>
        <begin position="106"/>
        <end position="274"/>
    </location>
</feature>
<feature type="region of interest" description="Disordered" evidence="3">
    <location>
        <begin position="1"/>
        <end position="32"/>
    </location>
</feature>
<feature type="binding site" evidence="1">
    <location>
        <begin position="162"/>
        <end position="165"/>
    </location>
    <ligand>
        <name>GTP</name>
        <dbReference type="ChEBI" id="CHEBI:37565"/>
    </ligand>
</feature>
<feature type="binding site" evidence="1">
    <location>
        <begin position="216"/>
        <end position="224"/>
    </location>
    <ligand>
        <name>GTP</name>
        <dbReference type="ChEBI" id="CHEBI:37565"/>
    </ligand>
</feature>
<feature type="binding site" evidence="1">
    <location>
        <position position="298"/>
    </location>
    <ligand>
        <name>Zn(2+)</name>
        <dbReference type="ChEBI" id="CHEBI:29105"/>
    </ligand>
</feature>
<feature type="binding site" evidence="1">
    <location>
        <position position="303"/>
    </location>
    <ligand>
        <name>Zn(2+)</name>
        <dbReference type="ChEBI" id="CHEBI:29105"/>
    </ligand>
</feature>
<feature type="binding site" evidence="1">
    <location>
        <position position="305"/>
    </location>
    <ligand>
        <name>Zn(2+)</name>
        <dbReference type="ChEBI" id="CHEBI:29105"/>
    </ligand>
</feature>
<feature type="binding site" evidence="1">
    <location>
        <position position="311"/>
    </location>
    <ligand>
        <name>Zn(2+)</name>
        <dbReference type="ChEBI" id="CHEBI:29105"/>
    </ligand>
</feature>
<sequence>MAKQKLTQNQKRRIHSNNAKALDRHRRQTKKQIDWQEDMLGETQDGVVVTRYSMHADVENAQGEVFRCNLRRTLAGVVVGDLVIWRQGHEKLQGISGVIEAVKPRKNELSRPDYYDGLKVMASNIDRIIIVSAVLPALSLNIIDRYLVICETANIPPVIVLNKIDLLSAEARQEAEQQLKIYRDIGYRTLMISAETGENMEKLTALLSQGTSIFVGQSGVGKSSLVNQIMPEVNAQTAEISENSGLGQHTTTSSRLYHLPQGGDLIDSPGIREFGLWHLDADQITKGYREFRHFLGACKFRDCKHLNDPQCALREAVEQGKIHPVRFDNYHRLISSKDEAKSQRHFTM</sequence>
<reference key="1">
    <citation type="journal article" date="2010" name="BMC Genomics">
        <title>A genomic perspective on the potential of Actinobacillus succinogenes for industrial succinate production.</title>
        <authorList>
            <person name="McKinlay J.B."/>
            <person name="Laivenieks M."/>
            <person name="Schindler B.D."/>
            <person name="McKinlay A.A."/>
            <person name="Siddaramappa S."/>
            <person name="Challacombe J.F."/>
            <person name="Lowry S.R."/>
            <person name="Clum A."/>
            <person name="Lapidus A.L."/>
            <person name="Burkhart K.B."/>
            <person name="Harkins V."/>
            <person name="Vieille C."/>
        </authorList>
    </citation>
    <scope>NUCLEOTIDE SEQUENCE [LARGE SCALE GENOMIC DNA]</scope>
    <source>
        <strain>ATCC 55618 / DSM 22257 / CCUG 43843 / 130Z</strain>
    </source>
</reference>
<accession>A6VN14</accession>
<protein>
    <recommendedName>
        <fullName evidence="1">Small ribosomal subunit biogenesis GTPase RsgA</fullName>
        <ecNumber evidence="1">3.6.1.-</ecNumber>
    </recommendedName>
</protein>
<organism>
    <name type="scientific">Actinobacillus succinogenes (strain ATCC 55618 / DSM 22257 / CCUG 43843 / 130Z)</name>
    <dbReference type="NCBI Taxonomy" id="339671"/>
    <lineage>
        <taxon>Bacteria</taxon>
        <taxon>Pseudomonadati</taxon>
        <taxon>Pseudomonadota</taxon>
        <taxon>Gammaproteobacteria</taxon>
        <taxon>Pasteurellales</taxon>
        <taxon>Pasteurellaceae</taxon>
        <taxon>Actinobacillus</taxon>
    </lineage>
</organism>